<dbReference type="EC" id="1.1.1.85" evidence="1"/>
<dbReference type="EMBL" id="BX640443">
    <property type="protein sequence ID" value="CAE32628.1"/>
    <property type="molecule type" value="Genomic_DNA"/>
</dbReference>
<dbReference type="SMR" id="Q7WKH4"/>
<dbReference type="KEGG" id="bbr:BB2132"/>
<dbReference type="eggNOG" id="COG0473">
    <property type="taxonomic scope" value="Bacteria"/>
</dbReference>
<dbReference type="HOGENOM" id="CLU_031953_0_3_4"/>
<dbReference type="UniPathway" id="UPA00048">
    <property type="reaction ID" value="UER00072"/>
</dbReference>
<dbReference type="Proteomes" id="UP000001027">
    <property type="component" value="Chromosome"/>
</dbReference>
<dbReference type="GO" id="GO:0005829">
    <property type="term" value="C:cytosol"/>
    <property type="evidence" value="ECO:0007669"/>
    <property type="project" value="TreeGrafter"/>
</dbReference>
<dbReference type="GO" id="GO:0003862">
    <property type="term" value="F:3-isopropylmalate dehydrogenase activity"/>
    <property type="evidence" value="ECO:0007669"/>
    <property type="project" value="UniProtKB-UniRule"/>
</dbReference>
<dbReference type="GO" id="GO:0000287">
    <property type="term" value="F:magnesium ion binding"/>
    <property type="evidence" value="ECO:0007669"/>
    <property type="project" value="InterPro"/>
</dbReference>
<dbReference type="GO" id="GO:0051287">
    <property type="term" value="F:NAD binding"/>
    <property type="evidence" value="ECO:0007669"/>
    <property type="project" value="InterPro"/>
</dbReference>
<dbReference type="GO" id="GO:0009098">
    <property type="term" value="P:L-leucine biosynthetic process"/>
    <property type="evidence" value="ECO:0007669"/>
    <property type="project" value="UniProtKB-UniRule"/>
</dbReference>
<dbReference type="FunFam" id="3.40.718.10:FF:000028">
    <property type="entry name" value="3-isopropylmalate dehydrogenase"/>
    <property type="match status" value="1"/>
</dbReference>
<dbReference type="Gene3D" id="3.40.718.10">
    <property type="entry name" value="Isopropylmalate Dehydrogenase"/>
    <property type="match status" value="1"/>
</dbReference>
<dbReference type="HAMAP" id="MF_01033">
    <property type="entry name" value="LeuB_type1"/>
    <property type="match status" value="1"/>
</dbReference>
<dbReference type="InterPro" id="IPR019818">
    <property type="entry name" value="IsoCit/isopropylmalate_DH_CS"/>
</dbReference>
<dbReference type="InterPro" id="IPR024084">
    <property type="entry name" value="IsoPropMal-DH-like_dom"/>
</dbReference>
<dbReference type="InterPro" id="IPR004429">
    <property type="entry name" value="Isopropylmalate_DH"/>
</dbReference>
<dbReference type="NCBIfam" id="TIGR00169">
    <property type="entry name" value="leuB"/>
    <property type="match status" value="1"/>
</dbReference>
<dbReference type="PANTHER" id="PTHR42979">
    <property type="entry name" value="3-ISOPROPYLMALATE DEHYDROGENASE"/>
    <property type="match status" value="1"/>
</dbReference>
<dbReference type="PANTHER" id="PTHR42979:SF1">
    <property type="entry name" value="3-ISOPROPYLMALATE DEHYDROGENASE"/>
    <property type="match status" value="1"/>
</dbReference>
<dbReference type="Pfam" id="PF00180">
    <property type="entry name" value="Iso_dh"/>
    <property type="match status" value="1"/>
</dbReference>
<dbReference type="SMART" id="SM01329">
    <property type="entry name" value="Iso_dh"/>
    <property type="match status" value="1"/>
</dbReference>
<dbReference type="SUPFAM" id="SSF53659">
    <property type="entry name" value="Isocitrate/Isopropylmalate dehydrogenase-like"/>
    <property type="match status" value="1"/>
</dbReference>
<dbReference type="PROSITE" id="PS00470">
    <property type="entry name" value="IDH_IMDH"/>
    <property type="match status" value="1"/>
</dbReference>
<sequence>MTHQIAVLPGDGIGPEIVEQAERVLKALDLPLELRQAPVGGAAFDQFEHPLPPATLELAQGSHAVLFGAVGDWKYDTLPREFRPEQAILGLRKALGLFANLRPAILYPELASASSLKPEIVSGLDILIIRELTGDIYFGTPRGVRTAADGAFAGEREGYDTMRYAESEVRRIARIGFESARKRNKKLCSVDKANVLETSQFWRDLVIEVSRDYPDVELSHMYVDNAAMQLVRNPRQFDVIVTGNLFGDILSDEAAMLTGSIGMLPSASLNAAGQGLYEPSHGSAPDIAGQGIANPLATILSAAMLLRYSLNLAPQADRVEAAVRKVLADGLRTADIHEAGTTKVSTSQMGDAVLKALG</sequence>
<protein>
    <recommendedName>
        <fullName evidence="1">3-isopropylmalate dehydrogenase 2</fullName>
        <ecNumber evidence="1">1.1.1.85</ecNumber>
    </recommendedName>
    <alternativeName>
        <fullName evidence="1">3-IPM-DH 2</fullName>
    </alternativeName>
    <alternativeName>
        <fullName evidence="1">Beta-IPM dehydrogenase 2</fullName>
        <shortName evidence="1">IMDH 2</shortName>
    </alternativeName>
</protein>
<keyword id="KW-0028">Amino-acid biosynthesis</keyword>
<keyword id="KW-0100">Branched-chain amino acid biosynthesis</keyword>
<keyword id="KW-0963">Cytoplasm</keyword>
<keyword id="KW-0432">Leucine biosynthesis</keyword>
<keyword id="KW-0460">Magnesium</keyword>
<keyword id="KW-0464">Manganese</keyword>
<keyword id="KW-0479">Metal-binding</keyword>
<keyword id="KW-0520">NAD</keyword>
<keyword id="KW-0560">Oxidoreductase</keyword>
<accession>Q7WKH4</accession>
<feature type="chain" id="PRO_0000083649" description="3-isopropylmalate dehydrogenase 2">
    <location>
        <begin position="1"/>
        <end position="358"/>
    </location>
</feature>
<feature type="binding site" evidence="1">
    <location>
        <position position="92"/>
    </location>
    <ligand>
        <name>substrate</name>
    </ligand>
</feature>
<feature type="binding site" evidence="1">
    <location>
        <position position="102"/>
    </location>
    <ligand>
        <name>substrate</name>
    </ligand>
</feature>
<feature type="binding site" evidence="1">
    <location>
        <position position="130"/>
    </location>
    <ligand>
        <name>substrate</name>
    </ligand>
</feature>
<feature type="binding site" evidence="1">
    <location>
        <position position="224"/>
    </location>
    <ligand>
        <name>Mg(2+)</name>
        <dbReference type="ChEBI" id="CHEBI:18420"/>
    </ligand>
</feature>
<feature type="binding site" evidence="1">
    <location>
        <position position="224"/>
    </location>
    <ligand>
        <name>substrate</name>
    </ligand>
</feature>
<feature type="binding site" evidence="1">
    <location>
        <position position="248"/>
    </location>
    <ligand>
        <name>Mg(2+)</name>
        <dbReference type="ChEBI" id="CHEBI:18420"/>
    </ligand>
</feature>
<feature type="binding site" evidence="1">
    <location>
        <position position="252"/>
    </location>
    <ligand>
        <name>Mg(2+)</name>
        <dbReference type="ChEBI" id="CHEBI:18420"/>
    </ligand>
</feature>
<feature type="binding site" evidence="1">
    <location>
        <begin position="282"/>
        <end position="294"/>
    </location>
    <ligand>
        <name>NAD(+)</name>
        <dbReference type="ChEBI" id="CHEBI:57540"/>
    </ligand>
</feature>
<feature type="site" description="Important for catalysis" evidence="1">
    <location>
        <position position="137"/>
    </location>
</feature>
<feature type="site" description="Important for catalysis" evidence="1">
    <location>
        <position position="192"/>
    </location>
</feature>
<comment type="function">
    <text evidence="1">Catalyzes the oxidation of 3-carboxy-2-hydroxy-4-methylpentanoate (3-isopropylmalate) to 3-carboxy-4-methyl-2-oxopentanoate. The product decarboxylates to 4-methyl-2 oxopentanoate.</text>
</comment>
<comment type="catalytic activity">
    <reaction evidence="1">
        <text>(2R,3S)-3-isopropylmalate + NAD(+) = 4-methyl-2-oxopentanoate + CO2 + NADH</text>
        <dbReference type="Rhea" id="RHEA:32271"/>
        <dbReference type="ChEBI" id="CHEBI:16526"/>
        <dbReference type="ChEBI" id="CHEBI:17865"/>
        <dbReference type="ChEBI" id="CHEBI:35121"/>
        <dbReference type="ChEBI" id="CHEBI:57540"/>
        <dbReference type="ChEBI" id="CHEBI:57945"/>
        <dbReference type="EC" id="1.1.1.85"/>
    </reaction>
</comment>
<comment type="cofactor">
    <cofactor evidence="1">
        <name>Mg(2+)</name>
        <dbReference type="ChEBI" id="CHEBI:18420"/>
    </cofactor>
    <cofactor evidence="1">
        <name>Mn(2+)</name>
        <dbReference type="ChEBI" id="CHEBI:29035"/>
    </cofactor>
    <text evidence="1">Binds 1 Mg(2+) or Mn(2+) ion per subunit.</text>
</comment>
<comment type="pathway">
    <text evidence="1">Amino-acid biosynthesis; L-leucine biosynthesis; L-leucine from 3-methyl-2-oxobutanoate: step 3/4.</text>
</comment>
<comment type="subunit">
    <text evidence="1">Homodimer.</text>
</comment>
<comment type="subcellular location">
    <subcellularLocation>
        <location evidence="1">Cytoplasm</location>
    </subcellularLocation>
</comment>
<comment type="similarity">
    <text evidence="1">Belongs to the isocitrate and isopropylmalate dehydrogenases family. LeuB type 1 subfamily.</text>
</comment>
<reference key="1">
    <citation type="journal article" date="2003" name="Nat. Genet.">
        <title>Comparative analysis of the genome sequences of Bordetella pertussis, Bordetella parapertussis and Bordetella bronchiseptica.</title>
        <authorList>
            <person name="Parkhill J."/>
            <person name="Sebaihia M."/>
            <person name="Preston A."/>
            <person name="Murphy L.D."/>
            <person name="Thomson N.R."/>
            <person name="Harris D.E."/>
            <person name="Holden M.T.G."/>
            <person name="Churcher C.M."/>
            <person name="Bentley S.D."/>
            <person name="Mungall K.L."/>
            <person name="Cerdeno-Tarraga A.-M."/>
            <person name="Temple L."/>
            <person name="James K.D."/>
            <person name="Harris B."/>
            <person name="Quail M.A."/>
            <person name="Achtman M."/>
            <person name="Atkin R."/>
            <person name="Baker S."/>
            <person name="Basham D."/>
            <person name="Bason N."/>
            <person name="Cherevach I."/>
            <person name="Chillingworth T."/>
            <person name="Collins M."/>
            <person name="Cronin A."/>
            <person name="Davis P."/>
            <person name="Doggett J."/>
            <person name="Feltwell T."/>
            <person name="Goble A."/>
            <person name="Hamlin N."/>
            <person name="Hauser H."/>
            <person name="Holroyd S."/>
            <person name="Jagels K."/>
            <person name="Leather S."/>
            <person name="Moule S."/>
            <person name="Norberczak H."/>
            <person name="O'Neil S."/>
            <person name="Ormond D."/>
            <person name="Price C."/>
            <person name="Rabbinowitsch E."/>
            <person name="Rutter S."/>
            <person name="Sanders M."/>
            <person name="Saunders D."/>
            <person name="Seeger K."/>
            <person name="Sharp S."/>
            <person name="Simmonds M."/>
            <person name="Skelton J."/>
            <person name="Squares R."/>
            <person name="Squares S."/>
            <person name="Stevens K."/>
            <person name="Unwin L."/>
            <person name="Whitehead S."/>
            <person name="Barrell B.G."/>
            <person name="Maskell D.J."/>
        </authorList>
    </citation>
    <scope>NUCLEOTIDE SEQUENCE [LARGE SCALE GENOMIC DNA]</scope>
    <source>
        <strain>ATCC BAA-588 / NCTC 13252 / RB50</strain>
    </source>
</reference>
<evidence type="ECO:0000255" key="1">
    <source>
        <dbReference type="HAMAP-Rule" id="MF_01033"/>
    </source>
</evidence>
<gene>
    <name evidence="1" type="primary">leuB2</name>
    <name type="ordered locus">BB2132</name>
</gene>
<organism>
    <name type="scientific">Bordetella bronchiseptica (strain ATCC BAA-588 / NCTC 13252 / RB50)</name>
    <name type="common">Alcaligenes bronchisepticus</name>
    <dbReference type="NCBI Taxonomy" id="257310"/>
    <lineage>
        <taxon>Bacteria</taxon>
        <taxon>Pseudomonadati</taxon>
        <taxon>Pseudomonadota</taxon>
        <taxon>Betaproteobacteria</taxon>
        <taxon>Burkholderiales</taxon>
        <taxon>Alcaligenaceae</taxon>
        <taxon>Bordetella</taxon>
    </lineage>
</organism>
<proteinExistence type="inferred from homology"/>
<name>LEU32_BORBR</name>